<proteinExistence type="inferred from homology"/>
<evidence type="ECO:0000255" key="1">
    <source>
        <dbReference type="HAMAP-Rule" id="MF_01667"/>
    </source>
</evidence>
<dbReference type="EC" id="1.1.1.79" evidence="1"/>
<dbReference type="EC" id="1.1.1.81" evidence="1"/>
<dbReference type="EMBL" id="CU928162">
    <property type="protein sequence ID" value="CAR10227.1"/>
    <property type="molecule type" value="Genomic_DNA"/>
</dbReference>
<dbReference type="RefSeq" id="WP_000805027.1">
    <property type="nucleotide sequence ID" value="NC_011745.1"/>
</dbReference>
<dbReference type="SMR" id="B7N1K7"/>
<dbReference type="GeneID" id="75203026"/>
<dbReference type="KEGG" id="ecq:ECED1_4238"/>
<dbReference type="HOGENOM" id="CLU_019796_1_2_6"/>
<dbReference type="Proteomes" id="UP000000748">
    <property type="component" value="Chromosome"/>
</dbReference>
<dbReference type="GO" id="GO:0005829">
    <property type="term" value="C:cytosol"/>
    <property type="evidence" value="ECO:0007669"/>
    <property type="project" value="TreeGrafter"/>
</dbReference>
<dbReference type="GO" id="GO:0005886">
    <property type="term" value="C:plasma membrane"/>
    <property type="evidence" value="ECO:0007669"/>
    <property type="project" value="UniProtKB-UniRule"/>
</dbReference>
<dbReference type="GO" id="GO:0030267">
    <property type="term" value="F:glyoxylate reductase (NADPH) activity"/>
    <property type="evidence" value="ECO:0007669"/>
    <property type="project" value="UniProtKB-UniRule"/>
</dbReference>
<dbReference type="GO" id="GO:0008465">
    <property type="term" value="F:hydroxypyruvate reductase (NADH) activity"/>
    <property type="evidence" value="ECO:0007669"/>
    <property type="project" value="RHEA"/>
</dbReference>
<dbReference type="GO" id="GO:0120509">
    <property type="term" value="F:hydroxypyruvate reductase (NADPH) activity"/>
    <property type="evidence" value="ECO:0007669"/>
    <property type="project" value="RHEA"/>
</dbReference>
<dbReference type="GO" id="GO:0051287">
    <property type="term" value="F:NAD binding"/>
    <property type="evidence" value="ECO:0007669"/>
    <property type="project" value="InterPro"/>
</dbReference>
<dbReference type="CDD" id="cd05301">
    <property type="entry name" value="GDH"/>
    <property type="match status" value="1"/>
</dbReference>
<dbReference type="FunFam" id="3.40.50.720:FF:000026">
    <property type="entry name" value="Glyoxylate/hydroxypyruvate reductase B"/>
    <property type="match status" value="1"/>
</dbReference>
<dbReference type="Gene3D" id="3.40.50.720">
    <property type="entry name" value="NAD(P)-binding Rossmann-like Domain"/>
    <property type="match status" value="2"/>
</dbReference>
<dbReference type="HAMAP" id="MF_01667">
    <property type="entry name" value="2_Hacid_dh_C_GhrB"/>
    <property type="match status" value="1"/>
</dbReference>
<dbReference type="InterPro" id="IPR050223">
    <property type="entry name" value="D-isomer_2-hydroxyacid_DH"/>
</dbReference>
<dbReference type="InterPro" id="IPR006139">
    <property type="entry name" value="D-isomer_2_OHA_DH_cat_dom"/>
</dbReference>
<dbReference type="InterPro" id="IPR029753">
    <property type="entry name" value="D-isomer_DH_CS"/>
</dbReference>
<dbReference type="InterPro" id="IPR006140">
    <property type="entry name" value="D-isomer_DH_NAD-bd"/>
</dbReference>
<dbReference type="InterPro" id="IPR023756">
    <property type="entry name" value="Glyo/OHPyrv_Rdtase_B"/>
</dbReference>
<dbReference type="InterPro" id="IPR036291">
    <property type="entry name" value="NAD(P)-bd_dom_sf"/>
</dbReference>
<dbReference type="NCBIfam" id="NF011938">
    <property type="entry name" value="PRK15409.1"/>
    <property type="match status" value="1"/>
</dbReference>
<dbReference type="PANTHER" id="PTHR10996">
    <property type="entry name" value="2-HYDROXYACID DEHYDROGENASE-RELATED"/>
    <property type="match status" value="1"/>
</dbReference>
<dbReference type="PANTHER" id="PTHR10996:SF283">
    <property type="entry name" value="GLYOXYLATE_HYDROXYPYRUVATE REDUCTASE B"/>
    <property type="match status" value="1"/>
</dbReference>
<dbReference type="Pfam" id="PF00389">
    <property type="entry name" value="2-Hacid_dh"/>
    <property type="match status" value="1"/>
</dbReference>
<dbReference type="Pfam" id="PF02826">
    <property type="entry name" value="2-Hacid_dh_C"/>
    <property type="match status" value="1"/>
</dbReference>
<dbReference type="SUPFAM" id="SSF52283">
    <property type="entry name" value="Formate/glycerate dehydrogenase catalytic domain-like"/>
    <property type="match status" value="1"/>
</dbReference>
<dbReference type="SUPFAM" id="SSF51735">
    <property type="entry name" value="NAD(P)-binding Rossmann-fold domains"/>
    <property type="match status" value="1"/>
</dbReference>
<dbReference type="PROSITE" id="PS00670">
    <property type="entry name" value="D_2_HYDROXYACID_DH_2"/>
    <property type="match status" value="1"/>
</dbReference>
<dbReference type="PROSITE" id="PS00671">
    <property type="entry name" value="D_2_HYDROXYACID_DH_3"/>
    <property type="match status" value="1"/>
</dbReference>
<organism>
    <name type="scientific">Escherichia coli O81 (strain ED1a)</name>
    <dbReference type="NCBI Taxonomy" id="585397"/>
    <lineage>
        <taxon>Bacteria</taxon>
        <taxon>Pseudomonadati</taxon>
        <taxon>Pseudomonadota</taxon>
        <taxon>Gammaproteobacteria</taxon>
        <taxon>Enterobacterales</taxon>
        <taxon>Enterobacteriaceae</taxon>
        <taxon>Escherichia</taxon>
    </lineage>
</organism>
<accession>B7N1K7</accession>
<name>GHRB_ECO81</name>
<keyword id="KW-0963">Cytoplasm</keyword>
<keyword id="KW-0520">NAD</keyword>
<keyword id="KW-0521">NADP</keyword>
<keyword id="KW-0560">Oxidoreductase</keyword>
<reference key="1">
    <citation type="journal article" date="2009" name="PLoS Genet.">
        <title>Organised genome dynamics in the Escherichia coli species results in highly diverse adaptive paths.</title>
        <authorList>
            <person name="Touchon M."/>
            <person name="Hoede C."/>
            <person name="Tenaillon O."/>
            <person name="Barbe V."/>
            <person name="Baeriswyl S."/>
            <person name="Bidet P."/>
            <person name="Bingen E."/>
            <person name="Bonacorsi S."/>
            <person name="Bouchier C."/>
            <person name="Bouvet O."/>
            <person name="Calteau A."/>
            <person name="Chiapello H."/>
            <person name="Clermont O."/>
            <person name="Cruveiller S."/>
            <person name="Danchin A."/>
            <person name="Diard M."/>
            <person name="Dossat C."/>
            <person name="Karoui M.E."/>
            <person name="Frapy E."/>
            <person name="Garry L."/>
            <person name="Ghigo J.M."/>
            <person name="Gilles A.M."/>
            <person name="Johnson J."/>
            <person name="Le Bouguenec C."/>
            <person name="Lescat M."/>
            <person name="Mangenot S."/>
            <person name="Martinez-Jehanne V."/>
            <person name="Matic I."/>
            <person name="Nassif X."/>
            <person name="Oztas S."/>
            <person name="Petit M.A."/>
            <person name="Pichon C."/>
            <person name="Rouy Z."/>
            <person name="Ruf C.S."/>
            <person name="Schneider D."/>
            <person name="Tourret J."/>
            <person name="Vacherie B."/>
            <person name="Vallenet D."/>
            <person name="Medigue C."/>
            <person name="Rocha E.P.C."/>
            <person name="Denamur E."/>
        </authorList>
    </citation>
    <scope>NUCLEOTIDE SEQUENCE [LARGE SCALE GENOMIC DNA]</scope>
    <source>
        <strain>ED1a</strain>
    </source>
</reference>
<gene>
    <name evidence="1" type="primary">ghrB</name>
    <name type="ordered locus">ECED1_4238</name>
</gene>
<feature type="chain" id="PRO_1000187287" description="Glyoxylate/hydroxypyruvate reductase B">
    <location>
        <begin position="1"/>
        <end position="324"/>
    </location>
</feature>
<feature type="active site" evidence="1">
    <location>
        <position position="237"/>
    </location>
</feature>
<feature type="active site" evidence="1">
    <location>
        <position position="266"/>
    </location>
</feature>
<feature type="active site" description="Proton donor" evidence="1">
    <location>
        <position position="285"/>
    </location>
</feature>
<protein>
    <recommendedName>
        <fullName evidence="1">Glyoxylate/hydroxypyruvate reductase B</fullName>
        <ecNumber evidence="1">1.1.1.79</ecNumber>
        <ecNumber evidence="1">1.1.1.81</ecNumber>
    </recommendedName>
</protein>
<sequence length="324" mass="35396">MKPSVILYKALPDDLLQRLQEHFTVHQVANLSPQTVEQNAAIFAEAEGLLGSNENVDAALLEKMPKLRATSTISVGYDNFDVDALTARKILLMHTPTVLTETVADTLMALVLSTARRVVEVAERVKAGEWTASIGPDWYGTDVHHKTLGIVGMGRIGMALAQRAHFGFNMPILYNARRHHKEAEERFNARYCDLDTLLQESDFVCLILPLTDETHHLFGAEQFAKMKSSAIFINAGRGPVVDENALIAALQKGEIHAAGLDVFEQEPLSVDSPLLSMANVVAVPHIGSATHETRYGMAACAVDNLIDALQGKVEKNCVNPHVAD</sequence>
<comment type="function">
    <text evidence="1">Catalyzes the NADPH-dependent reduction of glyoxylate and hydroxypyruvate into glycolate and glycerate, respectively.</text>
</comment>
<comment type="catalytic activity">
    <reaction evidence="1">
        <text>glycolate + NADP(+) = glyoxylate + NADPH + H(+)</text>
        <dbReference type="Rhea" id="RHEA:10992"/>
        <dbReference type="ChEBI" id="CHEBI:15378"/>
        <dbReference type="ChEBI" id="CHEBI:29805"/>
        <dbReference type="ChEBI" id="CHEBI:36655"/>
        <dbReference type="ChEBI" id="CHEBI:57783"/>
        <dbReference type="ChEBI" id="CHEBI:58349"/>
        <dbReference type="EC" id="1.1.1.79"/>
    </reaction>
</comment>
<comment type="catalytic activity">
    <reaction evidence="1">
        <text>(R)-glycerate + NAD(+) = 3-hydroxypyruvate + NADH + H(+)</text>
        <dbReference type="Rhea" id="RHEA:17905"/>
        <dbReference type="ChEBI" id="CHEBI:15378"/>
        <dbReference type="ChEBI" id="CHEBI:16659"/>
        <dbReference type="ChEBI" id="CHEBI:17180"/>
        <dbReference type="ChEBI" id="CHEBI:57540"/>
        <dbReference type="ChEBI" id="CHEBI:57945"/>
        <dbReference type="EC" id="1.1.1.81"/>
    </reaction>
</comment>
<comment type="catalytic activity">
    <reaction evidence="1">
        <text>(R)-glycerate + NADP(+) = 3-hydroxypyruvate + NADPH + H(+)</text>
        <dbReference type="Rhea" id="RHEA:18657"/>
        <dbReference type="ChEBI" id="CHEBI:15378"/>
        <dbReference type="ChEBI" id="CHEBI:16659"/>
        <dbReference type="ChEBI" id="CHEBI:17180"/>
        <dbReference type="ChEBI" id="CHEBI:57783"/>
        <dbReference type="ChEBI" id="CHEBI:58349"/>
        <dbReference type="EC" id="1.1.1.81"/>
    </reaction>
</comment>
<comment type="subunit">
    <text evidence="1">Homodimer.</text>
</comment>
<comment type="subcellular location">
    <subcellularLocation>
        <location evidence="1">Cytoplasm</location>
    </subcellularLocation>
</comment>
<comment type="similarity">
    <text evidence="1">Belongs to the D-isomer specific 2-hydroxyacid dehydrogenase family. GhrB subfamily.</text>
</comment>